<evidence type="ECO:0000255" key="1">
    <source>
        <dbReference type="HAMAP-Rule" id="MF_00270"/>
    </source>
</evidence>
<evidence type="ECO:0000305" key="2"/>
<gene>
    <name evidence="1" type="primary">rpsR</name>
    <name type="ordered locus">NGO_0583</name>
</gene>
<name>RS18_NEIG1</name>
<sequence>MARQSFKRRKFCRFTAEKIQEVDYKQVDLLKDFISENGKIIPARITGTKAFYQRQLAVAVKRARFLALLPYTDQHK</sequence>
<organism>
    <name type="scientific">Neisseria gonorrhoeae (strain ATCC 700825 / FA 1090)</name>
    <dbReference type="NCBI Taxonomy" id="242231"/>
    <lineage>
        <taxon>Bacteria</taxon>
        <taxon>Pseudomonadati</taxon>
        <taxon>Pseudomonadota</taxon>
        <taxon>Betaproteobacteria</taxon>
        <taxon>Neisseriales</taxon>
        <taxon>Neisseriaceae</taxon>
        <taxon>Neisseria</taxon>
    </lineage>
</organism>
<keyword id="KW-1185">Reference proteome</keyword>
<keyword id="KW-0687">Ribonucleoprotein</keyword>
<keyword id="KW-0689">Ribosomal protein</keyword>
<keyword id="KW-0694">RNA-binding</keyword>
<keyword id="KW-0699">rRNA-binding</keyword>
<accession>Q5F923</accession>
<dbReference type="EMBL" id="AE004969">
    <property type="protein sequence ID" value="AAW89314.1"/>
    <property type="molecule type" value="Genomic_DNA"/>
</dbReference>
<dbReference type="RefSeq" id="WP_002213306.1">
    <property type="nucleotide sequence ID" value="NC_002946.2"/>
</dbReference>
<dbReference type="RefSeq" id="YP_207726.1">
    <property type="nucleotide sequence ID" value="NC_002946.2"/>
</dbReference>
<dbReference type="SMR" id="Q5F923"/>
<dbReference type="STRING" id="242231.NGO_0583"/>
<dbReference type="GeneID" id="93385879"/>
<dbReference type="KEGG" id="ngo:NGO_0583"/>
<dbReference type="PATRIC" id="fig|242231.10.peg.689"/>
<dbReference type="HOGENOM" id="CLU_148710_2_2_4"/>
<dbReference type="Proteomes" id="UP000000535">
    <property type="component" value="Chromosome"/>
</dbReference>
<dbReference type="GO" id="GO:0022627">
    <property type="term" value="C:cytosolic small ribosomal subunit"/>
    <property type="evidence" value="ECO:0007669"/>
    <property type="project" value="TreeGrafter"/>
</dbReference>
<dbReference type="GO" id="GO:0070181">
    <property type="term" value="F:small ribosomal subunit rRNA binding"/>
    <property type="evidence" value="ECO:0007669"/>
    <property type="project" value="TreeGrafter"/>
</dbReference>
<dbReference type="GO" id="GO:0003735">
    <property type="term" value="F:structural constituent of ribosome"/>
    <property type="evidence" value="ECO:0007669"/>
    <property type="project" value="InterPro"/>
</dbReference>
<dbReference type="GO" id="GO:0006412">
    <property type="term" value="P:translation"/>
    <property type="evidence" value="ECO:0007669"/>
    <property type="project" value="UniProtKB-UniRule"/>
</dbReference>
<dbReference type="FunFam" id="4.10.640.10:FF:000001">
    <property type="entry name" value="30S ribosomal protein S18"/>
    <property type="match status" value="1"/>
</dbReference>
<dbReference type="Gene3D" id="4.10.640.10">
    <property type="entry name" value="Ribosomal protein S18"/>
    <property type="match status" value="1"/>
</dbReference>
<dbReference type="HAMAP" id="MF_00270">
    <property type="entry name" value="Ribosomal_bS18"/>
    <property type="match status" value="1"/>
</dbReference>
<dbReference type="InterPro" id="IPR001648">
    <property type="entry name" value="Ribosomal_bS18"/>
</dbReference>
<dbReference type="InterPro" id="IPR018275">
    <property type="entry name" value="Ribosomal_bS18_CS"/>
</dbReference>
<dbReference type="InterPro" id="IPR036870">
    <property type="entry name" value="Ribosomal_bS18_sf"/>
</dbReference>
<dbReference type="NCBIfam" id="TIGR00165">
    <property type="entry name" value="S18"/>
    <property type="match status" value="1"/>
</dbReference>
<dbReference type="PANTHER" id="PTHR13479">
    <property type="entry name" value="30S RIBOSOMAL PROTEIN S18"/>
    <property type="match status" value="1"/>
</dbReference>
<dbReference type="PANTHER" id="PTHR13479:SF40">
    <property type="entry name" value="SMALL RIBOSOMAL SUBUNIT PROTEIN BS18M"/>
    <property type="match status" value="1"/>
</dbReference>
<dbReference type="Pfam" id="PF01084">
    <property type="entry name" value="Ribosomal_S18"/>
    <property type="match status" value="1"/>
</dbReference>
<dbReference type="PRINTS" id="PR00974">
    <property type="entry name" value="RIBOSOMALS18"/>
</dbReference>
<dbReference type="SUPFAM" id="SSF46911">
    <property type="entry name" value="Ribosomal protein S18"/>
    <property type="match status" value="1"/>
</dbReference>
<dbReference type="PROSITE" id="PS00057">
    <property type="entry name" value="RIBOSOMAL_S18"/>
    <property type="match status" value="1"/>
</dbReference>
<protein>
    <recommendedName>
        <fullName evidence="1">Small ribosomal subunit protein bS18</fullName>
    </recommendedName>
    <alternativeName>
        <fullName evidence="2">30S ribosomal protein S18</fullName>
    </alternativeName>
</protein>
<reference key="1">
    <citation type="submission" date="2003-03" db="EMBL/GenBank/DDBJ databases">
        <title>The complete genome sequence of Neisseria gonorrhoeae.</title>
        <authorList>
            <person name="Lewis L.A."/>
            <person name="Gillaspy A.F."/>
            <person name="McLaughlin R.E."/>
            <person name="Gipson M."/>
            <person name="Ducey T.F."/>
            <person name="Ownbey T."/>
            <person name="Hartman K."/>
            <person name="Nydick C."/>
            <person name="Carson M.B."/>
            <person name="Vaughn J."/>
            <person name="Thomson C."/>
            <person name="Song L."/>
            <person name="Lin S."/>
            <person name="Yuan X."/>
            <person name="Najar F."/>
            <person name="Zhan M."/>
            <person name="Ren Q."/>
            <person name="Zhu H."/>
            <person name="Qi S."/>
            <person name="Kenton S.M."/>
            <person name="Lai H."/>
            <person name="White J.D."/>
            <person name="Clifton S."/>
            <person name="Roe B.A."/>
            <person name="Dyer D.W."/>
        </authorList>
    </citation>
    <scope>NUCLEOTIDE SEQUENCE [LARGE SCALE GENOMIC DNA]</scope>
    <source>
        <strain>ATCC 700825 / FA 1090</strain>
    </source>
</reference>
<feature type="chain" id="PRO_1000003543" description="Small ribosomal subunit protein bS18">
    <location>
        <begin position="1"/>
        <end position="76"/>
    </location>
</feature>
<comment type="function">
    <text evidence="1">Binds as a heterodimer with protein bS6 to the central domain of the 16S rRNA, where it helps stabilize the platform of the 30S subunit.</text>
</comment>
<comment type="subunit">
    <text evidence="1">Part of the 30S ribosomal subunit. Forms a tight heterodimer with protein bS6.</text>
</comment>
<comment type="similarity">
    <text evidence="1">Belongs to the bacterial ribosomal protein bS18 family.</text>
</comment>
<proteinExistence type="inferred from homology"/>